<name>RSMH_RICAE</name>
<dbReference type="EC" id="2.1.1.199" evidence="1"/>
<dbReference type="EMBL" id="CP001612">
    <property type="protein sequence ID" value="ACP53659.1"/>
    <property type="molecule type" value="Genomic_DNA"/>
</dbReference>
<dbReference type="RefSeq" id="WP_012719851.1">
    <property type="nucleotide sequence ID" value="NC_012633.1"/>
</dbReference>
<dbReference type="SMR" id="C3PNZ9"/>
<dbReference type="KEGG" id="raf:RAF_ORF0780"/>
<dbReference type="HOGENOM" id="CLU_038422_1_1_5"/>
<dbReference type="Proteomes" id="UP000002305">
    <property type="component" value="Chromosome"/>
</dbReference>
<dbReference type="GO" id="GO:0005737">
    <property type="term" value="C:cytoplasm"/>
    <property type="evidence" value="ECO:0007669"/>
    <property type="project" value="UniProtKB-SubCell"/>
</dbReference>
<dbReference type="GO" id="GO:0071424">
    <property type="term" value="F:rRNA (cytosine-N4-)-methyltransferase activity"/>
    <property type="evidence" value="ECO:0007669"/>
    <property type="project" value="UniProtKB-UniRule"/>
</dbReference>
<dbReference type="GO" id="GO:0070475">
    <property type="term" value="P:rRNA base methylation"/>
    <property type="evidence" value="ECO:0007669"/>
    <property type="project" value="UniProtKB-UniRule"/>
</dbReference>
<dbReference type="CDD" id="cd02440">
    <property type="entry name" value="AdoMet_MTases"/>
    <property type="match status" value="1"/>
</dbReference>
<dbReference type="FunFam" id="1.10.150.170:FF:000003">
    <property type="entry name" value="Ribosomal RNA small subunit methyltransferase H"/>
    <property type="match status" value="1"/>
</dbReference>
<dbReference type="Gene3D" id="1.10.150.170">
    <property type="entry name" value="Putative methyltransferase TM0872, insert domain"/>
    <property type="match status" value="1"/>
</dbReference>
<dbReference type="Gene3D" id="3.40.50.150">
    <property type="entry name" value="Vaccinia Virus protein VP39"/>
    <property type="match status" value="1"/>
</dbReference>
<dbReference type="HAMAP" id="MF_01007">
    <property type="entry name" value="16SrRNA_methyltr_H"/>
    <property type="match status" value="1"/>
</dbReference>
<dbReference type="InterPro" id="IPR002903">
    <property type="entry name" value="RsmH"/>
</dbReference>
<dbReference type="InterPro" id="IPR023397">
    <property type="entry name" value="SAM-dep_MeTrfase_MraW_recog"/>
</dbReference>
<dbReference type="InterPro" id="IPR029063">
    <property type="entry name" value="SAM-dependent_MTases_sf"/>
</dbReference>
<dbReference type="NCBIfam" id="TIGR00006">
    <property type="entry name" value="16S rRNA (cytosine(1402)-N(4))-methyltransferase RsmH"/>
    <property type="match status" value="1"/>
</dbReference>
<dbReference type="PANTHER" id="PTHR11265:SF0">
    <property type="entry name" value="12S RRNA N4-METHYLCYTIDINE METHYLTRANSFERASE"/>
    <property type="match status" value="1"/>
</dbReference>
<dbReference type="PANTHER" id="PTHR11265">
    <property type="entry name" value="S-ADENOSYL-METHYLTRANSFERASE MRAW"/>
    <property type="match status" value="1"/>
</dbReference>
<dbReference type="Pfam" id="PF01795">
    <property type="entry name" value="Methyltransf_5"/>
    <property type="match status" value="1"/>
</dbReference>
<dbReference type="PIRSF" id="PIRSF004486">
    <property type="entry name" value="MraW"/>
    <property type="match status" value="1"/>
</dbReference>
<dbReference type="SUPFAM" id="SSF81799">
    <property type="entry name" value="Putative methyltransferase TM0872, insert domain"/>
    <property type="match status" value="1"/>
</dbReference>
<dbReference type="SUPFAM" id="SSF53335">
    <property type="entry name" value="S-adenosyl-L-methionine-dependent methyltransferases"/>
    <property type="match status" value="1"/>
</dbReference>
<sequence>MIQSHVSVMLNEMLEALSPKAGESYLDCTFGAGGYSKAILESCNCYVTALDRDPNVIKRAEEIQQSYGERFDFVETNFADSFAKLKEKKFDGIVLDLGVSSMQLDIADRGFSFLHNGPLDMRMSGQGLSAEEFVNAAEEKELADVIYKYGDESFSRRIAKRIVEYRKTARIDSTSKLAEIVRSSIGFRKGKIDPATKTFQAIRIYVNDELGELEQFLVNVKNILKKDGRLVVVSFHSLEDRIVKNFFKENSEKPVVRSKYAKDDMTIDPNKWLKIITNKALAPSDKEVGLNIRARSAKLRAAKAIYE</sequence>
<accession>C3PNZ9</accession>
<organism>
    <name type="scientific">Rickettsia africae (strain ESF-5)</name>
    <dbReference type="NCBI Taxonomy" id="347255"/>
    <lineage>
        <taxon>Bacteria</taxon>
        <taxon>Pseudomonadati</taxon>
        <taxon>Pseudomonadota</taxon>
        <taxon>Alphaproteobacteria</taxon>
        <taxon>Rickettsiales</taxon>
        <taxon>Rickettsiaceae</taxon>
        <taxon>Rickettsieae</taxon>
        <taxon>Rickettsia</taxon>
        <taxon>spotted fever group</taxon>
    </lineage>
</organism>
<protein>
    <recommendedName>
        <fullName evidence="1">Ribosomal RNA small subunit methyltransferase H</fullName>
        <ecNumber evidence="1">2.1.1.199</ecNumber>
    </recommendedName>
    <alternativeName>
        <fullName evidence="1">16S rRNA m(4)C1402 methyltransferase</fullName>
    </alternativeName>
    <alternativeName>
        <fullName evidence="1">rRNA (cytosine-N(4)-)-methyltransferase RsmH</fullName>
    </alternativeName>
</protein>
<keyword id="KW-0963">Cytoplasm</keyword>
<keyword id="KW-0489">Methyltransferase</keyword>
<keyword id="KW-0698">rRNA processing</keyword>
<keyword id="KW-0949">S-adenosyl-L-methionine</keyword>
<keyword id="KW-0808">Transferase</keyword>
<proteinExistence type="inferred from homology"/>
<reference key="1">
    <citation type="journal article" date="2009" name="BMC Genomics">
        <title>Analysis of the Rickettsia africae genome reveals that virulence acquisition in Rickettsia species may be explained by genome reduction.</title>
        <authorList>
            <person name="Fournier P.-E."/>
            <person name="El Karkouri K."/>
            <person name="Leroy Q."/>
            <person name="Robert C."/>
            <person name="Giumelli B."/>
            <person name="Renesto P."/>
            <person name="Socolovschi C."/>
            <person name="Parola P."/>
            <person name="Audic S."/>
            <person name="Raoult D."/>
        </authorList>
    </citation>
    <scope>NUCLEOTIDE SEQUENCE [LARGE SCALE GENOMIC DNA]</scope>
    <source>
        <strain>ESF-5</strain>
    </source>
</reference>
<comment type="function">
    <text evidence="1">Specifically methylates the N4 position of cytidine in position 1402 (C1402) of 16S rRNA.</text>
</comment>
<comment type="catalytic activity">
    <reaction evidence="1">
        <text>cytidine(1402) in 16S rRNA + S-adenosyl-L-methionine = N(4)-methylcytidine(1402) in 16S rRNA + S-adenosyl-L-homocysteine + H(+)</text>
        <dbReference type="Rhea" id="RHEA:42928"/>
        <dbReference type="Rhea" id="RHEA-COMP:10286"/>
        <dbReference type="Rhea" id="RHEA-COMP:10287"/>
        <dbReference type="ChEBI" id="CHEBI:15378"/>
        <dbReference type="ChEBI" id="CHEBI:57856"/>
        <dbReference type="ChEBI" id="CHEBI:59789"/>
        <dbReference type="ChEBI" id="CHEBI:74506"/>
        <dbReference type="ChEBI" id="CHEBI:82748"/>
        <dbReference type="EC" id="2.1.1.199"/>
    </reaction>
</comment>
<comment type="subcellular location">
    <subcellularLocation>
        <location evidence="1">Cytoplasm</location>
    </subcellularLocation>
</comment>
<comment type="similarity">
    <text evidence="1">Belongs to the methyltransferase superfamily. RsmH family.</text>
</comment>
<gene>
    <name evidence="1" type="primary">rsmH</name>
    <name type="synonym">mraW</name>
    <name type="ordered locus">RAF_ORF0780</name>
</gene>
<feature type="chain" id="PRO_1000213164" description="Ribosomal RNA small subunit methyltransferase H">
    <location>
        <begin position="1"/>
        <end position="307"/>
    </location>
</feature>
<feature type="binding site" evidence="1">
    <location>
        <begin position="33"/>
        <end position="35"/>
    </location>
    <ligand>
        <name>S-adenosyl-L-methionine</name>
        <dbReference type="ChEBI" id="CHEBI:59789"/>
    </ligand>
</feature>
<feature type="binding site" evidence="1">
    <location>
        <position position="51"/>
    </location>
    <ligand>
        <name>S-adenosyl-L-methionine</name>
        <dbReference type="ChEBI" id="CHEBI:59789"/>
    </ligand>
</feature>
<feature type="binding site" evidence="1">
    <location>
        <position position="82"/>
    </location>
    <ligand>
        <name>S-adenosyl-L-methionine</name>
        <dbReference type="ChEBI" id="CHEBI:59789"/>
    </ligand>
</feature>
<feature type="binding site" evidence="1">
    <location>
        <position position="96"/>
    </location>
    <ligand>
        <name>S-adenosyl-L-methionine</name>
        <dbReference type="ChEBI" id="CHEBI:59789"/>
    </ligand>
</feature>
<feature type="binding site" evidence="1">
    <location>
        <position position="103"/>
    </location>
    <ligand>
        <name>S-adenosyl-L-methionine</name>
        <dbReference type="ChEBI" id="CHEBI:59789"/>
    </ligand>
</feature>
<evidence type="ECO:0000255" key="1">
    <source>
        <dbReference type="HAMAP-Rule" id="MF_01007"/>
    </source>
</evidence>